<comment type="function">
    <text evidence="3">Inhibits the activity of serine/threonine-protein phosphatases flw/PP1beta9C and Pp1-87B. Required for germ line cell viability and differentiation, normal transcriptional activity and maintenance of DNA integrity.</text>
</comment>
<comment type="subunit">
    <text evidence="3">Interacts with serine/threonine-protein phosphatases flw/PP1beta9C and Pp1-87B with higher affinity for Pp1-87B.</text>
</comment>
<comment type="subcellular location">
    <subcellularLocation>
        <location evidence="3">Cytoplasm</location>
    </subcellularLocation>
    <subcellularLocation>
        <location evidence="3">Chromosome</location>
    </subcellularLocation>
    <subcellularLocation>
        <location evidence="3">Nucleus</location>
    </subcellularLocation>
    <text evidence="3">In primary spermatocytes and maturing spermatids, found throughout the cytoplasm with a distinctive concentration in speckles. In the embryo, primarily cytoplasmic with some protein in speckles in both the nucleus and cytoplasm. In salivary glands, predominantly cytoplasmic with a mild perinuclear accumulation. Also detected on salivary gland polytene chromosomes where it is associated with regions of active transcription.</text>
</comment>
<comment type="developmental stage">
    <text evidence="3">Most abundant in early embryo, pupa and adult gonads (at protein level). In testis, expressed in mitotically proliferating spermatogonia and early primary spermatocytes with levels decreasing as spermatocytes mature and no expression in postmitotic stages.</text>
</comment>
<comment type="disruption phenotype">
    <text evidence="3">Embryos hatch normally but first instar larvae show very little locomotion or feeding and die soon after hatching. Embryos show transcriptional defects with reduced expression of ebony and Ass. Somatically-rescued mutant larvae show defective germ line cell viability and differentiation with damaged DNA.</text>
</comment>
<comment type="similarity">
    <text evidence="4">Belongs to the RNA polymerase II subunit 5-mediating protein family.</text>
</comment>
<comment type="sequence caution" evidence="4">
    <conflict type="frameshift">
        <sequence resource="EMBL-CDS" id="AAL39712"/>
    </conflict>
</comment>
<feature type="chain" id="PRO_0000436525" description="Unconventional prefoldin RPB5 interactor-like protein">
    <location>
        <begin position="1"/>
        <end position="731"/>
    </location>
</feature>
<feature type="region of interest" description="Disordered" evidence="2">
    <location>
        <begin position="205"/>
        <end position="224"/>
    </location>
</feature>
<feature type="region of interest" description="Disordered" evidence="2">
    <location>
        <begin position="259"/>
        <end position="302"/>
    </location>
</feature>
<feature type="region of interest" description="Disordered" evidence="2">
    <location>
        <begin position="370"/>
        <end position="396"/>
    </location>
</feature>
<feature type="region of interest" description="Disordered" evidence="2">
    <location>
        <begin position="508"/>
        <end position="527"/>
    </location>
</feature>
<feature type="region of interest" description="Disordered" evidence="2">
    <location>
        <begin position="567"/>
        <end position="682"/>
    </location>
</feature>
<feature type="region of interest" description="Disordered" evidence="2">
    <location>
        <begin position="694"/>
        <end position="731"/>
    </location>
</feature>
<feature type="coiled-coil region" evidence="1">
    <location>
        <begin position="91"/>
        <end position="115"/>
    </location>
</feature>
<feature type="coiled-coil region" evidence="1">
    <location>
        <begin position="143"/>
        <end position="176"/>
    </location>
</feature>
<feature type="coiled-coil region" evidence="1">
    <location>
        <begin position="220"/>
        <end position="258"/>
    </location>
</feature>
<feature type="coiled-coil region" evidence="1">
    <location>
        <begin position="357"/>
        <end position="379"/>
    </location>
</feature>
<feature type="coiled-coil region" evidence="1">
    <location>
        <begin position="452"/>
        <end position="477"/>
    </location>
</feature>
<feature type="compositionally biased region" description="Polar residues" evidence="2">
    <location>
        <begin position="205"/>
        <end position="217"/>
    </location>
</feature>
<feature type="compositionally biased region" description="Acidic residues" evidence="2">
    <location>
        <begin position="285"/>
        <end position="300"/>
    </location>
</feature>
<feature type="compositionally biased region" description="Polar residues" evidence="2">
    <location>
        <begin position="508"/>
        <end position="518"/>
    </location>
</feature>
<feature type="compositionally biased region" description="Polar residues" evidence="2">
    <location>
        <begin position="575"/>
        <end position="599"/>
    </location>
</feature>
<feature type="compositionally biased region" description="Basic and acidic residues" evidence="2">
    <location>
        <begin position="611"/>
        <end position="621"/>
    </location>
</feature>
<feature type="compositionally biased region" description="Polar residues" evidence="2">
    <location>
        <begin position="623"/>
        <end position="644"/>
    </location>
</feature>
<feature type="compositionally biased region" description="Basic residues" evidence="2">
    <location>
        <begin position="661"/>
        <end position="673"/>
    </location>
</feature>
<feature type="compositionally biased region" description="Basic and acidic residues" evidence="2">
    <location>
        <begin position="721"/>
        <end position="731"/>
    </location>
</feature>
<sequence length="731" mass="83924">MDRREDALLQALQTNASETERWEAFKRDNESTIRNLDKFAKNLSVEVMVPIGRKALMPGELIHTNELLVGHYEGYFSACSSHKAKEICQYRLKLAEEQLKKLAVENDLWQKKLHTPFAEGAVPSGDQVEIVEDFNEESHNKWLAEHRKRMRQQKQKERLEREAEPVKKDNEVLRKLEEREMMEELGLDPDNIDEDQLHDMLNQEPLKSTNESSPKSLTQEEEDELWKKLEAEEQNEADELSSEAEESLKTTDNLVRQLMSGETETPSSKKRTAGTNRNVEIQDPISEDDGDDDDEGDQEEEVRTIREQMSLLPNEDREPFLRAQLHVLKAKMRKIQKVNFISDELIHLMNVVVMLEDDLQDLVFEQELEASEEEEEVVENNHLPDEPSKELSTVSESSTNKRRISFALDDEKLEFRREETVAEMLPNAKKNSRDIIKLNAPLKPAGDPQPASIKTKRQTTQDILQKVERNIEFVKENQSVQDFDLLNRIMEESTGLINTLHISFTHSGAIPSPSSDQSDGIPGKPSDFYVRYEKDRARPNDSFPIYVNGFEGEEHVKVPIMSEAARGSAYEDPRSQFSKPNSSEICFTHSGSITPTSNDQSDDIPGNPFDFYEKYEKDRAKFSKSNSSEGDATDPESATKSILRNKSAVDLEPHNVNQQPKKGRKVRNQKKKERTLDDDLRDMSAYQKVMHDLVEKEPTAPEPLPPGKFIDSHAPKKRVSRFKEQRALNKT</sequence>
<keyword id="KW-0158">Chromosome</keyword>
<keyword id="KW-0175">Coiled coil</keyword>
<keyword id="KW-0963">Cytoplasm</keyword>
<keyword id="KW-0539">Nucleus</keyword>
<keyword id="KW-0650">Protein phosphatase inhibitor</keyword>
<keyword id="KW-1185">Reference proteome</keyword>
<name>URI_DROME</name>
<dbReference type="EMBL" id="AE013599">
    <property type="protein sequence ID" value="AAF47229.1"/>
    <property type="molecule type" value="Genomic_DNA"/>
</dbReference>
<dbReference type="EMBL" id="AY069567">
    <property type="protein sequence ID" value="AAL39712.1"/>
    <property type="status" value="ALT_FRAME"/>
    <property type="molecule type" value="mRNA"/>
</dbReference>
<dbReference type="EMBL" id="BT016108">
    <property type="protein sequence ID" value="AAV36993.1"/>
    <property type="molecule type" value="mRNA"/>
</dbReference>
<dbReference type="RefSeq" id="NP_611933.1">
    <property type="nucleotide sequence ID" value="NM_138089.4"/>
</dbReference>
<dbReference type="SMR" id="Q9W148"/>
<dbReference type="FunCoup" id="Q9W148">
    <property type="interactions" value="43"/>
</dbReference>
<dbReference type="IntAct" id="Q9W148">
    <property type="interactions" value="12"/>
</dbReference>
<dbReference type="STRING" id="7227.FBpp0072215"/>
<dbReference type="PaxDb" id="7227-FBpp0072215"/>
<dbReference type="EnsemblMetazoa" id="FBtr0072308">
    <property type="protein sequence ID" value="FBpp0072215"/>
    <property type="gene ID" value="FBgn0035025"/>
</dbReference>
<dbReference type="GeneID" id="37924"/>
<dbReference type="KEGG" id="dme:Dmel_CG11416"/>
<dbReference type="UCSC" id="CG11416-RA">
    <property type="organism name" value="d. melanogaster"/>
</dbReference>
<dbReference type="AGR" id="FB:FBgn0035025"/>
<dbReference type="CTD" id="37924"/>
<dbReference type="FlyBase" id="FBgn0035025">
    <property type="gene designation" value="uri"/>
</dbReference>
<dbReference type="VEuPathDB" id="VectorBase:FBgn0035025"/>
<dbReference type="eggNOG" id="KOG3130">
    <property type="taxonomic scope" value="Eukaryota"/>
</dbReference>
<dbReference type="GeneTree" id="ENSGT00390000002362"/>
<dbReference type="HOGENOM" id="CLU_025757_0_0_1"/>
<dbReference type="InParanoid" id="Q9W148"/>
<dbReference type="OMA" id="GHYQGYF"/>
<dbReference type="OrthoDB" id="21413at2759"/>
<dbReference type="PhylomeDB" id="Q9W148"/>
<dbReference type="BioGRID-ORCS" id="37924">
    <property type="hits" value="0 hits in 1 CRISPR screen"/>
</dbReference>
<dbReference type="GenomeRNAi" id="37924"/>
<dbReference type="PRO" id="PR:Q9W148"/>
<dbReference type="Proteomes" id="UP000000803">
    <property type="component" value="Chromosome 2R"/>
</dbReference>
<dbReference type="Bgee" id="FBgn0035025">
    <property type="expression patterns" value="Expressed in egg cell and 43 other cell types or tissues"/>
</dbReference>
<dbReference type="GO" id="GO:0005737">
    <property type="term" value="C:cytoplasm"/>
    <property type="evidence" value="ECO:0000314"/>
    <property type="project" value="FlyBase"/>
</dbReference>
<dbReference type="GO" id="GO:0005634">
    <property type="term" value="C:nucleus"/>
    <property type="evidence" value="ECO:0007669"/>
    <property type="project" value="UniProtKB-SubCell"/>
</dbReference>
<dbReference type="GO" id="GO:0005700">
    <property type="term" value="C:polytene chromosome"/>
    <property type="evidence" value="ECO:0000314"/>
    <property type="project" value="FlyBase"/>
</dbReference>
<dbReference type="GO" id="GO:0003682">
    <property type="term" value="F:chromatin binding"/>
    <property type="evidence" value="ECO:0000318"/>
    <property type="project" value="GO_Central"/>
</dbReference>
<dbReference type="GO" id="GO:0019212">
    <property type="term" value="F:phosphatase inhibitor activity"/>
    <property type="evidence" value="ECO:0000314"/>
    <property type="project" value="FlyBase"/>
</dbReference>
<dbReference type="GO" id="GO:0004864">
    <property type="term" value="F:protein phosphatase inhibitor activity"/>
    <property type="evidence" value="ECO:0007669"/>
    <property type="project" value="UniProtKB-KW"/>
</dbReference>
<dbReference type="GO" id="GO:0003714">
    <property type="term" value="F:transcription corepressor activity"/>
    <property type="evidence" value="ECO:0000318"/>
    <property type="project" value="GO_Central"/>
</dbReference>
<dbReference type="GO" id="GO:0042771">
    <property type="term" value="P:intrinsic apoptotic signaling pathway in response to DNA damage by p53 class mediator"/>
    <property type="evidence" value="ECO:0000318"/>
    <property type="project" value="GO_Central"/>
</dbReference>
<dbReference type="GO" id="GO:2001243">
    <property type="term" value="P:negative regulation of intrinsic apoptotic signaling pathway"/>
    <property type="evidence" value="ECO:0000318"/>
    <property type="project" value="GO_Central"/>
</dbReference>
<dbReference type="GO" id="GO:0000122">
    <property type="term" value="P:negative regulation of transcription by RNA polymerase II"/>
    <property type="evidence" value="ECO:0000318"/>
    <property type="project" value="GO_Central"/>
</dbReference>
<dbReference type="GO" id="GO:0007283">
    <property type="term" value="P:spermatogenesis"/>
    <property type="evidence" value="ECO:0000315"/>
    <property type="project" value="FlyBase"/>
</dbReference>
<dbReference type="CDD" id="cd23159">
    <property type="entry name" value="Prefoldin_URI1"/>
    <property type="match status" value="1"/>
</dbReference>
<dbReference type="Gene3D" id="1.10.287.370">
    <property type="match status" value="1"/>
</dbReference>
<dbReference type="InterPro" id="IPR009053">
    <property type="entry name" value="Prefoldin"/>
</dbReference>
<dbReference type="InterPro" id="IPR004127">
    <property type="entry name" value="Prefoldin_subunit_alpha"/>
</dbReference>
<dbReference type="InterPro" id="IPR052255">
    <property type="entry name" value="RNA_pol_II_subunit5-mediator"/>
</dbReference>
<dbReference type="PANTHER" id="PTHR15111">
    <property type="entry name" value="RNA POLYMERASE II SUBUNIT 5-MEDIATING PROTEIN NNX3"/>
    <property type="match status" value="1"/>
</dbReference>
<dbReference type="PANTHER" id="PTHR15111:SF0">
    <property type="entry name" value="UNCONVENTIONAL PREFOLDIN RPB5 INTERACTOR 1"/>
    <property type="match status" value="1"/>
</dbReference>
<dbReference type="Pfam" id="PF02996">
    <property type="entry name" value="Prefoldin"/>
    <property type="match status" value="1"/>
</dbReference>
<dbReference type="SUPFAM" id="SSF46579">
    <property type="entry name" value="Prefoldin"/>
    <property type="match status" value="1"/>
</dbReference>
<reference evidence="8" key="1">
    <citation type="journal article" date="2000" name="Science">
        <title>The genome sequence of Drosophila melanogaster.</title>
        <authorList>
            <person name="Adams M.D."/>
            <person name="Celniker S.E."/>
            <person name="Holt R.A."/>
            <person name="Evans C.A."/>
            <person name="Gocayne J.D."/>
            <person name="Amanatides P.G."/>
            <person name="Scherer S.E."/>
            <person name="Li P.W."/>
            <person name="Hoskins R.A."/>
            <person name="Galle R.F."/>
            <person name="George R.A."/>
            <person name="Lewis S.E."/>
            <person name="Richards S."/>
            <person name="Ashburner M."/>
            <person name="Henderson S.N."/>
            <person name="Sutton G.G."/>
            <person name="Wortman J.R."/>
            <person name="Yandell M.D."/>
            <person name="Zhang Q."/>
            <person name="Chen L.X."/>
            <person name="Brandon R.C."/>
            <person name="Rogers Y.-H.C."/>
            <person name="Blazej R.G."/>
            <person name="Champe M."/>
            <person name="Pfeiffer B.D."/>
            <person name="Wan K.H."/>
            <person name="Doyle C."/>
            <person name="Baxter E.G."/>
            <person name="Helt G."/>
            <person name="Nelson C.R."/>
            <person name="Miklos G.L.G."/>
            <person name="Abril J.F."/>
            <person name="Agbayani A."/>
            <person name="An H.-J."/>
            <person name="Andrews-Pfannkoch C."/>
            <person name="Baldwin D."/>
            <person name="Ballew R.M."/>
            <person name="Basu A."/>
            <person name="Baxendale J."/>
            <person name="Bayraktaroglu L."/>
            <person name="Beasley E.M."/>
            <person name="Beeson K.Y."/>
            <person name="Benos P.V."/>
            <person name="Berman B.P."/>
            <person name="Bhandari D."/>
            <person name="Bolshakov S."/>
            <person name="Borkova D."/>
            <person name="Botchan M.R."/>
            <person name="Bouck J."/>
            <person name="Brokstein P."/>
            <person name="Brottier P."/>
            <person name="Burtis K.C."/>
            <person name="Busam D.A."/>
            <person name="Butler H."/>
            <person name="Cadieu E."/>
            <person name="Center A."/>
            <person name="Chandra I."/>
            <person name="Cherry J.M."/>
            <person name="Cawley S."/>
            <person name="Dahlke C."/>
            <person name="Davenport L.B."/>
            <person name="Davies P."/>
            <person name="de Pablos B."/>
            <person name="Delcher A."/>
            <person name="Deng Z."/>
            <person name="Mays A.D."/>
            <person name="Dew I."/>
            <person name="Dietz S.M."/>
            <person name="Dodson K."/>
            <person name="Doup L.E."/>
            <person name="Downes M."/>
            <person name="Dugan-Rocha S."/>
            <person name="Dunkov B.C."/>
            <person name="Dunn P."/>
            <person name="Durbin K.J."/>
            <person name="Evangelista C.C."/>
            <person name="Ferraz C."/>
            <person name="Ferriera S."/>
            <person name="Fleischmann W."/>
            <person name="Fosler C."/>
            <person name="Gabrielian A.E."/>
            <person name="Garg N.S."/>
            <person name="Gelbart W.M."/>
            <person name="Glasser K."/>
            <person name="Glodek A."/>
            <person name="Gong F."/>
            <person name="Gorrell J.H."/>
            <person name="Gu Z."/>
            <person name="Guan P."/>
            <person name="Harris M."/>
            <person name="Harris N.L."/>
            <person name="Harvey D.A."/>
            <person name="Heiman T.J."/>
            <person name="Hernandez J.R."/>
            <person name="Houck J."/>
            <person name="Hostin D."/>
            <person name="Houston K.A."/>
            <person name="Howland T.J."/>
            <person name="Wei M.-H."/>
            <person name="Ibegwam C."/>
            <person name="Jalali M."/>
            <person name="Kalush F."/>
            <person name="Karpen G.H."/>
            <person name="Ke Z."/>
            <person name="Kennison J.A."/>
            <person name="Ketchum K.A."/>
            <person name="Kimmel B.E."/>
            <person name="Kodira C.D."/>
            <person name="Kraft C.L."/>
            <person name="Kravitz S."/>
            <person name="Kulp D."/>
            <person name="Lai Z."/>
            <person name="Lasko P."/>
            <person name="Lei Y."/>
            <person name="Levitsky A.A."/>
            <person name="Li J.H."/>
            <person name="Li Z."/>
            <person name="Liang Y."/>
            <person name="Lin X."/>
            <person name="Liu X."/>
            <person name="Mattei B."/>
            <person name="McIntosh T.C."/>
            <person name="McLeod M.P."/>
            <person name="McPherson D."/>
            <person name="Merkulov G."/>
            <person name="Milshina N.V."/>
            <person name="Mobarry C."/>
            <person name="Morris J."/>
            <person name="Moshrefi A."/>
            <person name="Mount S.M."/>
            <person name="Moy M."/>
            <person name="Murphy B."/>
            <person name="Murphy L."/>
            <person name="Muzny D.M."/>
            <person name="Nelson D.L."/>
            <person name="Nelson D.R."/>
            <person name="Nelson K.A."/>
            <person name="Nixon K."/>
            <person name="Nusskern D.R."/>
            <person name="Pacleb J.M."/>
            <person name="Palazzolo M."/>
            <person name="Pittman G.S."/>
            <person name="Pan S."/>
            <person name="Pollard J."/>
            <person name="Puri V."/>
            <person name="Reese M.G."/>
            <person name="Reinert K."/>
            <person name="Remington K."/>
            <person name="Saunders R.D.C."/>
            <person name="Scheeler F."/>
            <person name="Shen H."/>
            <person name="Shue B.C."/>
            <person name="Siden-Kiamos I."/>
            <person name="Simpson M."/>
            <person name="Skupski M.P."/>
            <person name="Smith T.J."/>
            <person name="Spier E."/>
            <person name="Spradling A.C."/>
            <person name="Stapleton M."/>
            <person name="Strong R."/>
            <person name="Sun E."/>
            <person name="Svirskas R."/>
            <person name="Tector C."/>
            <person name="Turner R."/>
            <person name="Venter E."/>
            <person name="Wang A.H."/>
            <person name="Wang X."/>
            <person name="Wang Z.-Y."/>
            <person name="Wassarman D.A."/>
            <person name="Weinstock G.M."/>
            <person name="Weissenbach J."/>
            <person name="Williams S.M."/>
            <person name="Woodage T."/>
            <person name="Worley K.C."/>
            <person name="Wu D."/>
            <person name="Yang S."/>
            <person name="Yao Q.A."/>
            <person name="Ye J."/>
            <person name="Yeh R.-F."/>
            <person name="Zaveri J.S."/>
            <person name="Zhan M."/>
            <person name="Zhang G."/>
            <person name="Zhao Q."/>
            <person name="Zheng L."/>
            <person name="Zheng X.H."/>
            <person name="Zhong F.N."/>
            <person name="Zhong W."/>
            <person name="Zhou X."/>
            <person name="Zhu S.C."/>
            <person name="Zhu X."/>
            <person name="Smith H.O."/>
            <person name="Gibbs R.A."/>
            <person name="Myers E.W."/>
            <person name="Rubin G.M."/>
            <person name="Venter J.C."/>
        </authorList>
    </citation>
    <scope>NUCLEOTIDE SEQUENCE [LARGE SCALE GENOMIC DNA]</scope>
    <source>
        <strain evidence="8">Berkeley</strain>
    </source>
</reference>
<reference evidence="8" key="2">
    <citation type="journal article" date="2002" name="Genome Biol.">
        <title>Annotation of the Drosophila melanogaster euchromatic genome: a systematic review.</title>
        <authorList>
            <person name="Misra S."/>
            <person name="Crosby M.A."/>
            <person name="Mungall C.J."/>
            <person name="Matthews B.B."/>
            <person name="Campbell K.S."/>
            <person name="Hradecky P."/>
            <person name="Huang Y."/>
            <person name="Kaminker J.S."/>
            <person name="Millburn G.H."/>
            <person name="Prochnik S.E."/>
            <person name="Smith C.D."/>
            <person name="Tupy J.L."/>
            <person name="Whitfield E.J."/>
            <person name="Bayraktaroglu L."/>
            <person name="Berman B.P."/>
            <person name="Bettencourt B.R."/>
            <person name="Celniker S.E."/>
            <person name="de Grey A.D.N.J."/>
            <person name="Drysdale R.A."/>
            <person name="Harris N.L."/>
            <person name="Richter J."/>
            <person name="Russo S."/>
            <person name="Schroeder A.J."/>
            <person name="Shu S.Q."/>
            <person name="Stapleton M."/>
            <person name="Yamada C."/>
            <person name="Ashburner M."/>
            <person name="Gelbart W.M."/>
            <person name="Rubin G.M."/>
            <person name="Lewis S.E."/>
        </authorList>
    </citation>
    <scope>GENOME REANNOTATION</scope>
    <source>
        <strain evidence="8">Berkeley</strain>
    </source>
</reference>
<reference evidence="5" key="3">
    <citation type="journal article" date="2002" name="Genome Biol.">
        <title>A Drosophila full-length cDNA resource.</title>
        <authorList>
            <person name="Stapleton M."/>
            <person name="Carlson J.W."/>
            <person name="Brokstein P."/>
            <person name="Yu C."/>
            <person name="Champe M."/>
            <person name="George R.A."/>
            <person name="Guarin H."/>
            <person name="Kronmiller B."/>
            <person name="Pacleb J.M."/>
            <person name="Park S."/>
            <person name="Wan K.H."/>
            <person name="Rubin G.M."/>
            <person name="Celniker S.E."/>
        </authorList>
    </citation>
    <scope>NUCLEOTIDE SEQUENCE [LARGE SCALE MRNA]</scope>
    <source>
        <strain evidence="5">Berkeley</strain>
        <tissue evidence="5">Embryo</tissue>
    </source>
</reference>
<reference evidence="6" key="4">
    <citation type="submission" date="2004-10" db="EMBL/GenBank/DDBJ databases">
        <authorList>
            <person name="Stapleton M."/>
            <person name="Carlson J."/>
            <person name="Chavez C."/>
            <person name="Frise E."/>
            <person name="George R."/>
            <person name="Pacleb J."/>
            <person name="Park S."/>
            <person name="Wan K."/>
            <person name="Yu C."/>
            <person name="Rubin G.M."/>
            <person name="Celniker S."/>
        </authorList>
    </citation>
    <scope>NUCLEOTIDE SEQUENCE [LARGE SCALE MRNA]</scope>
    <source>
        <strain evidence="6">Berkeley</strain>
        <tissue evidence="6">Embryo</tissue>
    </source>
</reference>
<reference evidence="4" key="5">
    <citation type="journal article" date="2008" name="BMC Mol. Biol.">
        <title>Drosophila Uri, a PP1alpha binding protein, is essential for viability, maintenance of DNA integrity and normal transcriptional activity.</title>
        <authorList>
            <person name="Kirchner J."/>
            <person name="Vissi E."/>
            <person name="Gross S."/>
            <person name="Szoor B."/>
            <person name="Rudenko A."/>
            <person name="Alphey L."/>
            <person name="White-Cooper H."/>
        </authorList>
    </citation>
    <scope>FUNCTION</scope>
    <scope>INTERACTION WITH FLW AND PP1-87B</scope>
    <scope>SUBCELLULAR LOCATION</scope>
    <scope>DEVELOPMENTAL STAGE</scope>
    <scope>DISRUPTION PHENOTYPE</scope>
</reference>
<evidence type="ECO:0000255" key="1"/>
<evidence type="ECO:0000256" key="2">
    <source>
        <dbReference type="SAM" id="MobiDB-lite"/>
    </source>
</evidence>
<evidence type="ECO:0000269" key="3">
    <source>
    </source>
</evidence>
<evidence type="ECO:0000305" key="4"/>
<evidence type="ECO:0000312" key="5">
    <source>
        <dbReference type="EMBL" id="AAL39712.1"/>
    </source>
</evidence>
<evidence type="ECO:0000312" key="6">
    <source>
        <dbReference type="EMBL" id="AAV36993.1"/>
    </source>
</evidence>
<evidence type="ECO:0000312" key="7">
    <source>
        <dbReference type="FlyBase" id="FBgn0035025"/>
    </source>
</evidence>
<evidence type="ECO:0000312" key="8">
    <source>
        <dbReference type="Proteomes" id="UP000000803"/>
    </source>
</evidence>
<protein>
    <recommendedName>
        <fullName evidence="4">Unconventional prefoldin RPB5 interactor-like protein</fullName>
    </recommendedName>
</protein>
<proteinExistence type="evidence at protein level"/>
<accession>Q9W148</accession>
<accession>Q8T044</accession>
<organism evidence="8">
    <name type="scientific">Drosophila melanogaster</name>
    <name type="common">Fruit fly</name>
    <dbReference type="NCBI Taxonomy" id="7227"/>
    <lineage>
        <taxon>Eukaryota</taxon>
        <taxon>Metazoa</taxon>
        <taxon>Ecdysozoa</taxon>
        <taxon>Arthropoda</taxon>
        <taxon>Hexapoda</taxon>
        <taxon>Insecta</taxon>
        <taxon>Pterygota</taxon>
        <taxon>Neoptera</taxon>
        <taxon>Endopterygota</taxon>
        <taxon>Diptera</taxon>
        <taxon>Brachycera</taxon>
        <taxon>Muscomorpha</taxon>
        <taxon>Ephydroidea</taxon>
        <taxon>Drosophilidae</taxon>
        <taxon>Drosophila</taxon>
        <taxon>Sophophora</taxon>
    </lineage>
</organism>
<gene>
    <name evidence="7" type="primary">uri</name>
    <name evidence="7" type="synonym">ori</name>
    <name evidence="7" type="ORF">CG11416</name>
</gene>